<evidence type="ECO:0000305" key="1"/>
<gene>
    <name type="primary">NTF4</name>
</gene>
<organism>
    <name type="scientific">Macrovipera lebetinus</name>
    <name type="common">Levantine viper</name>
    <name type="synonym">Vipera lebetina</name>
    <dbReference type="NCBI Taxonomy" id="3148341"/>
    <lineage>
        <taxon>Eukaryota</taxon>
        <taxon>Metazoa</taxon>
        <taxon>Chordata</taxon>
        <taxon>Craniata</taxon>
        <taxon>Vertebrata</taxon>
        <taxon>Euteleostomi</taxon>
        <taxon>Lepidosauria</taxon>
        <taxon>Squamata</taxon>
        <taxon>Bifurcata</taxon>
        <taxon>Unidentata</taxon>
        <taxon>Episquamata</taxon>
        <taxon>Toxicofera</taxon>
        <taxon>Serpentes</taxon>
        <taxon>Colubroidea</taxon>
        <taxon>Viperidae</taxon>
        <taxon>Viperinae</taxon>
        <taxon>Macrovipera</taxon>
    </lineage>
</organism>
<feature type="chain" id="PRO_0000159613" description="Neurotrophin-4">
    <location>
        <begin position="1" status="less than"/>
        <end position="43" status="greater than"/>
    </location>
</feature>
<feature type="non-terminal residue">
    <location>
        <position position="1"/>
    </location>
</feature>
<feature type="non-terminal residue">
    <location>
        <position position="43"/>
    </location>
</feature>
<accession>P25436</accession>
<sequence>KCNPAGGTVGGCRGVDRRHWISECKAKQSYVRALTMDSDKIVG</sequence>
<comment type="function">
    <text>NT-4 could play a role in oogenesis and/or early embryogenesis. NT-4 interacts with the low affinity NGF receptor and elicits neurite outgrowth from explanted dorsal root ganglia with no and lower activity in sympathetic and nodose ganglia, respectively.</text>
</comment>
<comment type="similarity">
    <text evidence="1">Belongs to the NGF-beta family.</text>
</comment>
<protein>
    <recommendedName>
        <fullName>Neurotrophin-4</fullName>
        <shortName>NT-4</shortName>
    </recommendedName>
</protein>
<reference key="1">
    <citation type="journal article" date="1991" name="Neuron">
        <title>Evolutionary studies of the nerve growth factor family reveal a novel member abundantly expressed in Xenopus ovary.</title>
        <authorList>
            <person name="Hallboeoek F."/>
            <person name="Ibanez C.F."/>
            <person name="Persson H."/>
        </authorList>
    </citation>
    <scope>NUCLEOTIDE SEQUENCE [GENOMIC DNA]</scope>
</reference>
<dbReference type="SMR" id="P25436"/>
<dbReference type="GO" id="GO:0030424">
    <property type="term" value="C:axon"/>
    <property type="evidence" value="ECO:0007669"/>
    <property type="project" value="TreeGrafter"/>
</dbReference>
<dbReference type="GO" id="GO:0030425">
    <property type="term" value="C:dendrite"/>
    <property type="evidence" value="ECO:0007669"/>
    <property type="project" value="TreeGrafter"/>
</dbReference>
<dbReference type="GO" id="GO:0005615">
    <property type="term" value="C:extracellular space"/>
    <property type="evidence" value="ECO:0007669"/>
    <property type="project" value="TreeGrafter"/>
</dbReference>
<dbReference type="GO" id="GO:0008021">
    <property type="term" value="C:synaptic vesicle"/>
    <property type="evidence" value="ECO:0007669"/>
    <property type="project" value="TreeGrafter"/>
</dbReference>
<dbReference type="GO" id="GO:0008083">
    <property type="term" value="F:growth factor activity"/>
    <property type="evidence" value="ECO:0007669"/>
    <property type="project" value="UniProtKB-KW"/>
</dbReference>
<dbReference type="GO" id="GO:0005163">
    <property type="term" value="F:nerve growth factor receptor binding"/>
    <property type="evidence" value="ECO:0007669"/>
    <property type="project" value="TreeGrafter"/>
</dbReference>
<dbReference type="GO" id="GO:0007169">
    <property type="term" value="P:cell surface receptor protein tyrosine kinase signaling pathway"/>
    <property type="evidence" value="ECO:0007669"/>
    <property type="project" value="TreeGrafter"/>
</dbReference>
<dbReference type="GO" id="GO:0050804">
    <property type="term" value="P:modulation of chemical synaptic transmission"/>
    <property type="evidence" value="ECO:0007669"/>
    <property type="project" value="TreeGrafter"/>
</dbReference>
<dbReference type="GO" id="GO:0043524">
    <property type="term" value="P:negative regulation of neuron apoptotic process"/>
    <property type="evidence" value="ECO:0007669"/>
    <property type="project" value="TreeGrafter"/>
</dbReference>
<dbReference type="GO" id="GO:0021675">
    <property type="term" value="P:nerve development"/>
    <property type="evidence" value="ECO:0007669"/>
    <property type="project" value="TreeGrafter"/>
</dbReference>
<dbReference type="GO" id="GO:0038180">
    <property type="term" value="P:nerve growth factor signaling pathway"/>
    <property type="evidence" value="ECO:0007669"/>
    <property type="project" value="TreeGrafter"/>
</dbReference>
<dbReference type="GO" id="GO:0048812">
    <property type="term" value="P:neuron projection morphogenesis"/>
    <property type="evidence" value="ECO:0007669"/>
    <property type="project" value="TreeGrafter"/>
</dbReference>
<dbReference type="GO" id="GO:0048477">
    <property type="term" value="P:oogenesis"/>
    <property type="evidence" value="ECO:0007669"/>
    <property type="project" value="UniProtKB-KW"/>
</dbReference>
<dbReference type="Gene3D" id="2.10.90.10">
    <property type="entry name" value="Cystine-knot cytokines"/>
    <property type="match status" value="1"/>
</dbReference>
<dbReference type="InterPro" id="IPR029034">
    <property type="entry name" value="Cystine-knot_cytokine"/>
</dbReference>
<dbReference type="InterPro" id="IPR020408">
    <property type="entry name" value="Nerve_growth_factor-like"/>
</dbReference>
<dbReference type="InterPro" id="IPR002072">
    <property type="entry name" value="Nerve_growth_factor-rel"/>
</dbReference>
<dbReference type="InterPro" id="IPR019846">
    <property type="entry name" value="Nerve_growth_factor_CS"/>
</dbReference>
<dbReference type="PANTHER" id="PTHR11589">
    <property type="entry name" value="NERVE GROWTH FACTOR NGF -RELATED"/>
    <property type="match status" value="1"/>
</dbReference>
<dbReference type="PANTHER" id="PTHR11589:SF8">
    <property type="entry name" value="NEUROTROPHIN-4"/>
    <property type="match status" value="1"/>
</dbReference>
<dbReference type="Pfam" id="PF00243">
    <property type="entry name" value="NGF"/>
    <property type="match status" value="1"/>
</dbReference>
<dbReference type="SMART" id="SM00140">
    <property type="entry name" value="NGF"/>
    <property type="match status" value="1"/>
</dbReference>
<dbReference type="SUPFAM" id="SSF57501">
    <property type="entry name" value="Cystine-knot cytokines"/>
    <property type="match status" value="1"/>
</dbReference>
<dbReference type="PROSITE" id="PS00248">
    <property type="entry name" value="NGF_1"/>
    <property type="match status" value="1"/>
</dbReference>
<dbReference type="PROSITE" id="PS50270">
    <property type="entry name" value="NGF_2"/>
    <property type="match status" value="1"/>
</dbReference>
<proteinExistence type="inferred from homology"/>
<keyword id="KW-0217">Developmental protein</keyword>
<keyword id="KW-0221">Differentiation</keyword>
<keyword id="KW-0339">Growth factor</keyword>
<keyword id="KW-0896">Oogenesis</keyword>
<name>NTF4_MACLB</name>